<protein>
    <recommendedName>
        <fullName evidence="1">NAD(P)H-quinone oxidoreductase subunit J, chloroplastic</fullName>
        <ecNumber evidence="1">7.1.1.-</ecNumber>
    </recommendedName>
    <alternativeName>
        <fullName>NAD(P)H dehydrogenase subunit J</fullName>
    </alternativeName>
    <alternativeName>
        <fullName evidence="1">NADH-plastoquinone oxidoreductase subunit J</fullName>
    </alternativeName>
</protein>
<reference key="1">
    <citation type="journal article" date="2000" name="Plant Mol. Biol. Rep.">
        <title>Chinese spring wheat (Triticum aestivum L.) chloroplast genome: complete sequence and contig clones.</title>
        <authorList>
            <person name="Ogihara Y."/>
            <person name="Isono K."/>
            <person name="Kojima T."/>
            <person name="Endo A."/>
            <person name="Hanaoka M."/>
            <person name="Shiina T."/>
            <person name="Terachi T."/>
            <person name="Utsugi S."/>
            <person name="Murata M."/>
            <person name="Mori N."/>
            <person name="Takumi S."/>
            <person name="Ikeo K."/>
            <person name="Gojobori T."/>
            <person name="Murai R."/>
            <person name="Murai K."/>
            <person name="Matsuoka Y."/>
            <person name="Ohnishi Y."/>
            <person name="Tajiri H."/>
            <person name="Tsunewaki K."/>
        </authorList>
    </citation>
    <scope>NUCLEOTIDE SEQUENCE [LARGE SCALE GENOMIC DNA]</scope>
    <source>
        <strain>cv. Chinese Spring</strain>
    </source>
</reference>
<comment type="function">
    <text evidence="1">NDH shuttles electrons from NAD(P)H:plastoquinone, via FMN and iron-sulfur (Fe-S) centers, to quinones in the photosynthetic chain and possibly in a chloroplast respiratory chain. The immediate electron acceptor for the enzyme in this species is believed to be plastoquinone. Couples the redox reaction to proton translocation, and thus conserves the redox energy in a proton gradient.</text>
</comment>
<comment type="catalytic activity">
    <reaction evidence="1">
        <text>a plastoquinone + NADH + (n+1) H(+)(in) = a plastoquinol + NAD(+) + n H(+)(out)</text>
        <dbReference type="Rhea" id="RHEA:42608"/>
        <dbReference type="Rhea" id="RHEA-COMP:9561"/>
        <dbReference type="Rhea" id="RHEA-COMP:9562"/>
        <dbReference type="ChEBI" id="CHEBI:15378"/>
        <dbReference type="ChEBI" id="CHEBI:17757"/>
        <dbReference type="ChEBI" id="CHEBI:57540"/>
        <dbReference type="ChEBI" id="CHEBI:57945"/>
        <dbReference type="ChEBI" id="CHEBI:62192"/>
    </reaction>
</comment>
<comment type="catalytic activity">
    <reaction evidence="1">
        <text>a plastoquinone + NADPH + (n+1) H(+)(in) = a plastoquinol + NADP(+) + n H(+)(out)</text>
        <dbReference type="Rhea" id="RHEA:42612"/>
        <dbReference type="Rhea" id="RHEA-COMP:9561"/>
        <dbReference type="Rhea" id="RHEA-COMP:9562"/>
        <dbReference type="ChEBI" id="CHEBI:15378"/>
        <dbReference type="ChEBI" id="CHEBI:17757"/>
        <dbReference type="ChEBI" id="CHEBI:57783"/>
        <dbReference type="ChEBI" id="CHEBI:58349"/>
        <dbReference type="ChEBI" id="CHEBI:62192"/>
    </reaction>
</comment>
<comment type="subunit">
    <text evidence="1">NDH is composed of at least 16 different subunits, 5 of which are encoded in the nucleus.</text>
</comment>
<comment type="subcellular location">
    <subcellularLocation>
        <location evidence="1">Plastid</location>
        <location evidence="1">Chloroplast thylakoid membrane</location>
        <topology evidence="1">Peripheral membrane protein</topology>
        <orientation evidence="1">Stromal side</orientation>
    </subcellularLocation>
</comment>
<comment type="similarity">
    <text evidence="1">Belongs to the complex I 30 kDa subunit family.</text>
</comment>
<sequence length="159" mass="18711">MQQGWLSNWLVKHEVVHRSLGFDHRGIETLQIKAGDWDSIAVILYVYGYNYLRSQCAYDVAPGGSLASVYHLTRIQYGIDNPEEVCIKVFAQKDNPRIPSVFWIWRSADFQERESYDMVGISYDNHPRLKRILMPESWIGWPLRKDYITPNFYEIQDAH</sequence>
<keyword id="KW-0150">Chloroplast</keyword>
<keyword id="KW-0472">Membrane</keyword>
<keyword id="KW-0520">NAD</keyword>
<keyword id="KW-0521">NADP</keyword>
<keyword id="KW-0934">Plastid</keyword>
<keyword id="KW-0618">Plastoquinone</keyword>
<keyword id="KW-0874">Quinone</keyword>
<keyword id="KW-1185">Reference proteome</keyword>
<keyword id="KW-0793">Thylakoid</keyword>
<keyword id="KW-1278">Translocase</keyword>
<keyword id="KW-0813">Transport</keyword>
<feature type="chain" id="PRO_0000118664" description="NAD(P)H-quinone oxidoreductase subunit J, chloroplastic">
    <location>
        <begin position="1"/>
        <end position="159"/>
    </location>
</feature>
<proteinExistence type="inferred from homology"/>
<organism>
    <name type="scientific">Triticum aestivum</name>
    <name type="common">Wheat</name>
    <dbReference type="NCBI Taxonomy" id="4565"/>
    <lineage>
        <taxon>Eukaryota</taxon>
        <taxon>Viridiplantae</taxon>
        <taxon>Streptophyta</taxon>
        <taxon>Embryophyta</taxon>
        <taxon>Tracheophyta</taxon>
        <taxon>Spermatophyta</taxon>
        <taxon>Magnoliopsida</taxon>
        <taxon>Liliopsida</taxon>
        <taxon>Poales</taxon>
        <taxon>Poaceae</taxon>
        <taxon>BOP clade</taxon>
        <taxon>Pooideae</taxon>
        <taxon>Triticodae</taxon>
        <taxon>Triticeae</taxon>
        <taxon>Triticinae</taxon>
        <taxon>Triticum</taxon>
    </lineage>
</organism>
<gene>
    <name evidence="1" type="primary">ndhJ</name>
</gene>
<dbReference type="EC" id="7.1.1.-" evidence="1"/>
<dbReference type="EMBL" id="AB042240">
    <property type="protein sequence ID" value="BAB47037.1"/>
    <property type="molecule type" value="Genomic_DNA"/>
</dbReference>
<dbReference type="RefSeq" id="NP_114262.1">
    <property type="nucleotide sequence ID" value="NC_002762.1"/>
</dbReference>
<dbReference type="SMR" id="Q95H60"/>
<dbReference type="STRING" id="4565.Q95H60"/>
<dbReference type="PaxDb" id="4565-EPlTAEP00000010037"/>
<dbReference type="EnsemblPlants" id="TraesARI2D03G01325290.1">
    <property type="protein sequence ID" value="TraesARI2D03G01325290.1.CDS1"/>
    <property type="gene ID" value="TraesARI2D03G01325290"/>
</dbReference>
<dbReference type="EnsemblPlants" id="TraesKARUn01G0028090.1">
    <property type="protein sequence ID" value="cds.TraesKARUn01G0028090.1"/>
    <property type="gene ID" value="TraesKARUn01G0028090"/>
</dbReference>
<dbReference type="EnsemblPlants" id="TraesKARUn01G0089350.1">
    <property type="protein sequence ID" value="cds.TraesKARUn01G0089350.1"/>
    <property type="gene ID" value="TraesKARUn01G0089350"/>
</dbReference>
<dbReference type="EnsemblPlants" id="TraesKARUn01G0114230.1">
    <property type="protein sequence ID" value="cds.TraesKARUn01G0114230.1"/>
    <property type="gene ID" value="TraesKARUn01G0114230"/>
</dbReference>
<dbReference type="EnsemblPlants" id="TraesKARUn01G0123070.1">
    <property type="protein sequence ID" value="cds.TraesKARUn01G0123070.1"/>
    <property type="gene ID" value="TraesKARUn01G0123070"/>
</dbReference>
<dbReference type="EnsemblPlants" id="TraesKARUn01G0185750.1">
    <property type="protein sequence ID" value="cds.TraesKARUn01G0185750.1"/>
    <property type="gene ID" value="TraesKARUn01G0185750"/>
</dbReference>
<dbReference type="EnsemblPlants" id="TraesKARUn01G0185840.1">
    <property type="protein sequence ID" value="cds.TraesKARUn01G0185840.1"/>
    <property type="gene ID" value="TraesKARUn01G0185840"/>
</dbReference>
<dbReference type="EnsemblPlants" id="TraesKARUn01G0186030.1">
    <property type="protein sequence ID" value="cds.TraesKARUn01G0186030.1"/>
    <property type="gene ID" value="TraesKARUn01G0186030"/>
</dbReference>
<dbReference type="EnsemblPlants" id="TraesKARUn01G0186530.1">
    <property type="protein sequence ID" value="cds.TraesKARUn01G0186530.1"/>
    <property type="gene ID" value="TraesKARUn01G0186530"/>
</dbReference>
<dbReference type="EnsemblPlants" id="TraesKARUn01G0186690.1">
    <property type="protein sequence ID" value="cds.TraesKARUn01G0186690.1"/>
    <property type="gene ID" value="TraesKARUn01G0186690"/>
</dbReference>
<dbReference type="EnsemblPlants" id="TraesNOR3B03G01768140.1">
    <property type="protein sequence ID" value="TraesNOR3B03G01768140.1.CDS1"/>
    <property type="gene ID" value="TraesNOR3B03G01768140"/>
</dbReference>
<dbReference type="GeneID" id="803097"/>
<dbReference type="Gramene" id="TraesARI2D03G01325290.1">
    <property type="protein sequence ID" value="TraesARI2D03G01325290.1.CDS1"/>
    <property type="gene ID" value="TraesARI2D03G01325290"/>
</dbReference>
<dbReference type="Gramene" id="TraesKARUn01G0028090.1">
    <property type="protein sequence ID" value="cds.TraesKARUn01G0028090.1"/>
    <property type="gene ID" value="TraesKARUn01G0028090"/>
</dbReference>
<dbReference type="Gramene" id="TraesKARUn01G0089350.1">
    <property type="protein sequence ID" value="cds.TraesKARUn01G0089350.1"/>
    <property type="gene ID" value="TraesKARUn01G0089350"/>
</dbReference>
<dbReference type="Gramene" id="TraesKARUn01G0114230.1">
    <property type="protein sequence ID" value="cds.TraesKARUn01G0114230.1"/>
    <property type="gene ID" value="TraesKARUn01G0114230"/>
</dbReference>
<dbReference type="Gramene" id="TraesKARUn01G0123070.1">
    <property type="protein sequence ID" value="cds.TraesKARUn01G0123070.1"/>
    <property type="gene ID" value="TraesKARUn01G0123070"/>
</dbReference>
<dbReference type="Gramene" id="TraesKARUn01G0185750.1">
    <property type="protein sequence ID" value="cds.TraesKARUn01G0185750.1"/>
    <property type="gene ID" value="TraesKARUn01G0185750"/>
</dbReference>
<dbReference type="Gramene" id="TraesKARUn01G0185840.1">
    <property type="protein sequence ID" value="cds.TraesKARUn01G0185840.1"/>
    <property type="gene ID" value="TraesKARUn01G0185840"/>
</dbReference>
<dbReference type="Gramene" id="TraesKARUn01G0186030.1">
    <property type="protein sequence ID" value="cds.TraesKARUn01G0186030.1"/>
    <property type="gene ID" value="TraesKARUn01G0186030"/>
</dbReference>
<dbReference type="Gramene" id="TraesKARUn01G0186530.1">
    <property type="protein sequence ID" value="cds.TraesKARUn01G0186530.1"/>
    <property type="gene ID" value="TraesKARUn01G0186530"/>
</dbReference>
<dbReference type="Gramene" id="TraesKARUn01G0186690.1">
    <property type="protein sequence ID" value="cds.TraesKARUn01G0186690.1"/>
    <property type="gene ID" value="TraesKARUn01G0186690"/>
</dbReference>
<dbReference type="Gramene" id="TraesNOR3B03G01768140.1">
    <property type="protein sequence ID" value="TraesNOR3B03G01768140.1.CDS1"/>
    <property type="gene ID" value="TraesNOR3B03G01768140"/>
</dbReference>
<dbReference type="KEGG" id="taes:803097"/>
<dbReference type="eggNOG" id="KOG1713">
    <property type="taxonomic scope" value="Eukaryota"/>
</dbReference>
<dbReference type="HOGENOM" id="CLU_042628_9_1_1"/>
<dbReference type="Proteomes" id="UP000019116">
    <property type="component" value="Chloroplast"/>
</dbReference>
<dbReference type="GO" id="GO:0009535">
    <property type="term" value="C:chloroplast thylakoid membrane"/>
    <property type="evidence" value="ECO:0007669"/>
    <property type="project" value="UniProtKB-SubCell"/>
</dbReference>
<dbReference type="GO" id="GO:0008137">
    <property type="term" value="F:NADH dehydrogenase (ubiquinone) activity"/>
    <property type="evidence" value="ECO:0007669"/>
    <property type="project" value="InterPro"/>
</dbReference>
<dbReference type="GO" id="GO:0048038">
    <property type="term" value="F:quinone binding"/>
    <property type="evidence" value="ECO:0007669"/>
    <property type="project" value="UniProtKB-KW"/>
</dbReference>
<dbReference type="GO" id="GO:0019684">
    <property type="term" value="P:photosynthesis, light reaction"/>
    <property type="evidence" value="ECO:0007669"/>
    <property type="project" value="UniProtKB-UniRule"/>
</dbReference>
<dbReference type="Gene3D" id="3.30.460.80">
    <property type="entry name" value="NADH:ubiquinone oxidoreductase, 30kDa subunit"/>
    <property type="match status" value="1"/>
</dbReference>
<dbReference type="HAMAP" id="MF_01357">
    <property type="entry name" value="NDH1_NuoC"/>
    <property type="match status" value="1"/>
</dbReference>
<dbReference type="InterPro" id="IPR010218">
    <property type="entry name" value="NADH_DH_suC"/>
</dbReference>
<dbReference type="InterPro" id="IPR037232">
    <property type="entry name" value="NADH_quin_OxRdtase_su_C/D-like"/>
</dbReference>
<dbReference type="InterPro" id="IPR001268">
    <property type="entry name" value="NADH_UbQ_OxRdtase_30kDa_su"/>
</dbReference>
<dbReference type="InterPro" id="IPR020396">
    <property type="entry name" value="NADH_UbQ_OxRdtase_CS"/>
</dbReference>
<dbReference type="NCBIfam" id="NF009141">
    <property type="entry name" value="PRK12494.1"/>
    <property type="match status" value="1"/>
</dbReference>
<dbReference type="PANTHER" id="PTHR10884:SF14">
    <property type="entry name" value="NADH DEHYDROGENASE [UBIQUINONE] IRON-SULFUR PROTEIN 3, MITOCHONDRIAL"/>
    <property type="match status" value="1"/>
</dbReference>
<dbReference type="PANTHER" id="PTHR10884">
    <property type="entry name" value="NADH DEHYDROGENASE UBIQUINONE IRON-SULFUR PROTEIN 3"/>
    <property type="match status" value="1"/>
</dbReference>
<dbReference type="Pfam" id="PF00329">
    <property type="entry name" value="Complex1_30kDa"/>
    <property type="match status" value="1"/>
</dbReference>
<dbReference type="SUPFAM" id="SSF143243">
    <property type="entry name" value="Nqo5-like"/>
    <property type="match status" value="1"/>
</dbReference>
<dbReference type="PROSITE" id="PS00542">
    <property type="entry name" value="COMPLEX1_30K"/>
    <property type="match status" value="1"/>
</dbReference>
<name>NDHJ_WHEAT</name>
<accession>Q95H60</accession>
<geneLocation type="chloroplast"/>
<evidence type="ECO:0000255" key="1">
    <source>
        <dbReference type="HAMAP-Rule" id="MF_01357"/>
    </source>
</evidence>